<gene>
    <name type="primary">Erc2</name>
    <name type="synonym">Cast1</name>
    <name type="synonym">Cmbp</name>
</gene>
<evidence type="ECO:0000250" key="1">
    <source>
        <dbReference type="UniProtKB" id="Q6PH08"/>
    </source>
</evidence>
<evidence type="ECO:0000255" key="2"/>
<evidence type="ECO:0000256" key="3">
    <source>
        <dbReference type="SAM" id="MobiDB-lite"/>
    </source>
</evidence>
<evidence type="ECO:0000269" key="4">
    <source>
    </source>
</evidence>
<evidence type="ECO:0000269" key="5">
    <source>
    </source>
</evidence>
<evidence type="ECO:0000269" key="6">
    <source>
    </source>
</evidence>
<evidence type="ECO:0000303" key="7">
    <source>
    </source>
</evidence>
<evidence type="ECO:0000305" key="8"/>
<evidence type="ECO:0000305" key="9">
    <source>
    </source>
</evidence>
<accession>Q8K3M6</accession>
<accession>Q8CIZ0</accession>
<protein>
    <recommendedName>
        <fullName>ERC protein 2</fullName>
    </recommendedName>
    <alternativeName>
        <fullName>CAZ-associated structural protein 1</fullName>
        <shortName>CAST1</shortName>
        <shortName>Cast</shortName>
    </alternativeName>
    <alternativeName>
        <fullName>Cytomatrix protein p110</fullName>
    </alternativeName>
</protein>
<name>ERC2_RAT</name>
<comment type="function">
    <text>Thought to be involved in the organization of the cytomatrix at the nerve terminals active zone (CAZ) which regulates neurotransmitter release. Seems to act together with BSN. May recruit liprin-alpha proteins to the CAZ.</text>
</comment>
<comment type="subunit">
    <text evidence="4 6">Interacts with BSN, ERC1, PPFIA1, PPFIA2, PPFIA3 and PPFIA4. Interacts through its C-terminus with the PDZ domain of RIMS1. Part of a complex consisting of ERC2, RIMS1 and UNC13A.</text>
</comment>
<comment type="subcellular location">
    <subcellularLocation>
        <location>Cytoplasm</location>
    </subcellularLocation>
    <subcellularLocation>
        <location>Synapse</location>
    </subcellularLocation>
    <subcellularLocation>
        <location evidence="9">Presynaptic active zone</location>
    </subcellularLocation>
    <subcellularLocation>
        <location>Cytoplasm</location>
        <location>Cytoskeleton</location>
    </subcellularLocation>
    <text>Localized to the active zone of presynaptic density. Colocalizes with RIMS1 and BSN in early stages of synapse formation.</text>
</comment>
<comment type="alternative products">
    <event type="alternative splicing"/>
    <isoform>
        <id>Q8K3M6-1</id>
        <name>1</name>
        <sequence type="displayed"/>
    </isoform>
    <isoform>
        <id>Q8K3M6-2</id>
        <name>2</name>
        <sequence type="described" ref="VSP_011472 VSP_011473 VSP_011474"/>
    </isoform>
</comment>
<comment type="tissue specificity">
    <text evidence="4 5">Predominantly expressed in brain, including hippocampus, cortex, cerebellum, amygdala and olfactory bulb.</text>
</comment>
<comment type="developmental stage">
    <text evidence="4">Detected at embryonic day 18 dpc and at later stages. The expression does not significantly change during the developmental stages tested.</text>
</comment>
<dbReference type="EMBL" id="AY049038">
    <property type="protein sequence ID" value="AAL07517.1"/>
    <property type="molecule type" value="mRNA"/>
</dbReference>
<dbReference type="EMBL" id="AF541925">
    <property type="protein sequence ID" value="AAN39292.1"/>
    <property type="molecule type" value="mRNA"/>
</dbReference>
<dbReference type="RefSeq" id="NP_740768.1">
    <property type="nucleotide sequence ID" value="NM_170787.2"/>
</dbReference>
<dbReference type="PDB" id="8WHM">
    <property type="method" value="X-ray"/>
    <property type="resolution" value="2.30 A"/>
    <property type="chains" value="A=261-317"/>
</dbReference>
<dbReference type="PDBsum" id="8WHM"/>
<dbReference type="SMR" id="Q8K3M6"/>
<dbReference type="BioGRID" id="251731">
    <property type="interactions" value="1"/>
</dbReference>
<dbReference type="CORUM" id="Q8K3M6"/>
<dbReference type="FunCoup" id="Q8K3M6">
    <property type="interactions" value="2138"/>
</dbReference>
<dbReference type="STRING" id="10116.ENSRNOP00000041403"/>
<dbReference type="iPTMnet" id="Q8K3M6"/>
<dbReference type="PhosphoSitePlus" id="Q8K3M6"/>
<dbReference type="PaxDb" id="10116-ENSRNOP00000041403"/>
<dbReference type="GeneID" id="259269"/>
<dbReference type="KEGG" id="rno:259269"/>
<dbReference type="UCSC" id="RGD:708372">
    <molecule id="Q8K3M6-1"/>
    <property type="organism name" value="rat"/>
</dbReference>
<dbReference type="AGR" id="RGD:708372"/>
<dbReference type="CTD" id="26059"/>
<dbReference type="RGD" id="708372">
    <property type="gene designation" value="Erc2"/>
</dbReference>
<dbReference type="eggNOG" id="KOG4809">
    <property type="taxonomic scope" value="Eukaryota"/>
</dbReference>
<dbReference type="InParanoid" id="Q8K3M6"/>
<dbReference type="OrthoDB" id="6429828at2759"/>
<dbReference type="PhylomeDB" id="Q8K3M6"/>
<dbReference type="TreeFam" id="TF324969"/>
<dbReference type="CD-CODE" id="F9F240AC">
    <property type="entry name" value="Presynaptic clusters"/>
</dbReference>
<dbReference type="PRO" id="PR:Q8K3M6"/>
<dbReference type="Proteomes" id="UP000002494">
    <property type="component" value="Unplaced"/>
</dbReference>
<dbReference type="GO" id="GO:0005856">
    <property type="term" value="C:cytoskeleton"/>
    <property type="evidence" value="ECO:0007669"/>
    <property type="project" value="UniProtKB-SubCell"/>
</dbReference>
<dbReference type="GO" id="GO:0005783">
    <property type="term" value="C:endoplasmic reticulum"/>
    <property type="evidence" value="ECO:0000303"/>
    <property type="project" value="UniProtKB"/>
</dbReference>
<dbReference type="GO" id="GO:0098982">
    <property type="term" value="C:GABA-ergic synapse"/>
    <property type="evidence" value="ECO:0000266"/>
    <property type="project" value="RGD"/>
</dbReference>
<dbReference type="GO" id="GO:0098978">
    <property type="term" value="C:glutamatergic synapse"/>
    <property type="evidence" value="ECO:0000266"/>
    <property type="project" value="RGD"/>
</dbReference>
<dbReference type="GO" id="GO:0005798">
    <property type="term" value="C:Golgi-associated vesicle"/>
    <property type="evidence" value="ECO:0000314"/>
    <property type="project" value="UniProtKB"/>
</dbReference>
<dbReference type="GO" id="GO:0030426">
    <property type="term" value="C:growth cone"/>
    <property type="evidence" value="ECO:0000314"/>
    <property type="project" value="UniProtKB"/>
</dbReference>
<dbReference type="GO" id="GO:0043025">
    <property type="term" value="C:neuronal cell body"/>
    <property type="evidence" value="ECO:0000314"/>
    <property type="project" value="RGD"/>
</dbReference>
<dbReference type="GO" id="GO:0048786">
    <property type="term" value="C:presynaptic active zone"/>
    <property type="evidence" value="ECO:0000314"/>
    <property type="project" value="UniProtKB"/>
</dbReference>
<dbReference type="GO" id="GO:0098831">
    <property type="term" value="C:presynaptic active zone cytoplasmic component"/>
    <property type="evidence" value="ECO:0000314"/>
    <property type="project" value="SynGO"/>
</dbReference>
<dbReference type="GO" id="GO:0042734">
    <property type="term" value="C:presynaptic membrane"/>
    <property type="evidence" value="ECO:0000314"/>
    <property type="project" value="UniProtKB"/>
</dbReference>
<dbReference type="GO" id="GO:0032991">
    <property type="term" value="C:protein-containing complex"/>
    <property type="evidence" value="ECO:0000314"/>
    <property type="project" value="RGD"/>
</dbReference>
<dbReference type="GO" id="GO:0045202">
    <property type="term" value="C:synapse"/>
    <property type="evidence" value="ECO:0000266"/>
    <property type="project" value="RGD"/>
</dbReference>
<dbReference type="GO" id="GO:0043195">
    <property type="term" value="C:terminal bouton"/>
    <property type="evidence" value="ECO:0000314"/>
    <property type="project" value="RGD"/>
</dbReference>
<dbReference type="GO" id="GO:0030165">
    <property type="term" value="F:PDZ domain binding"/>
    <property type="evidence" value="ECO:0000353"/>
    <property type="project" value="RGD"/>
</dbReference>
<dbReference type="GO" id="GO:0044877">
    <property type="term" value="F:protein-containing complex binding"/>
    <property type="evidence" value="ECO:0000314"/>
    <property type="project" value="RGD"/>
</dbReference>
<dbReference type="GO" id="GO:0098882">
    <property type="term" value="F:structural constituent of presynaptic active zone"/>
    <property type="evidence" value="ECO:0000266"/>
    <property type="project" value="RGD"/>
</dbReference>
<dbReference type="GO" id="GO:0048790">
    <property type="term" value="P:maintenance of presynaptic active zone structure"/>
    <property type="evidence" value="ECO:0000318"/>
    <property type="project" value="GO_Central"/>
</dbReference>
<dbReference type="GO" id="GO:0150037">
    <property type="term" value="P:regulation of calcium-dependent activation of synaptic vesicle fusion"/>
    <property type="evidence" value="ECO:0000266"/>
    <property type="project" value="RGD"/>
</dbReference>
<dbReference type="GO" id="GO:0099509">
    <property type="term" value="P:regulation of presynaptic cytosolic calcium ion concentration"/>
    <property type="evidence" value="ECO:0000266"/>
    <property type="project" value="RGD"/>
</dbReference>
<dbReference type="GO" id="GO:0007416">
    <property type="term" value="P:synapse assembly"/>
    <property type="evidence" value="ECO:0000303"/>
    <property type="project" value="UniProtKB"/>
</dbReference>
<dbReference type="GO" id="GO:0050808">
    <property type="term" value="P:synapse organization"/>
    <property type="evidence" value="ECO:0000270"/>
    <property type="project" value="RGD"/>
</dbReference>
<dbReference type="GO" id="GO:0016082">
    <property type="term" value="P:synaptic vesicle priming"/>
    <property type="evidence" value="ECO:0000266"/>
    <property type="project" value="RGD"/>
</dbReference>
<dbReference type="Gene3D" id="1.10.287.1490">
    <property type="match status" value="1"/>
</dbReference>
<dbReference type="InterPro" id="IPR019323">
    <property type="entry name" value="ELKS/CAST"/>
</dbReference>
<dbReference type="PANTHER" id="PTHR18861">
    <property type="entry name" value="ELKS/RAB6-INTERACTING/CAST PROTEIN"/>
    <property type="match status" value="1"/>
</dbReference>
<dbReference type="PANTHER" id="PTHR18861:SF3">
    <property type="entry name" value="ERC PROTEIN 2"/>
    <property type="match status" value="1"/>
</dbReference>
<dbReference type="Pfam" id="PF10174">
    <property type="entry name" value="Cast"/>
    <property type="match status" value="1"/>
</dbReference>
<dbReference type="SUPFAM" id="SSF57997">
    <property type="entry name" value="Tropomyosin"/>
    <property type="match status" value="1"/>
</dbReference>
<organism>
    <name type="scientific">Rattus norvegicus</name>
    <name type="common">Rat</name>
    <dbReference type="NCBI Taxonomy" id="10116"/>
    <lineage>
        <taxon>Eukaryota</taxon>
        <taxon>Metazoa</taxon>
        <taxon>Chordata</taxon>
        <taxon>Craniata</taxon>
        <taxon>Vertebrata</taxon>
        <taxon>Euteleostomi</taxon>
        <taxon>Mammalia</taxon>
        <taxon>Eutheria</taxon>
        <taxon>Euarchontoglires</taxon>
        <taxon>Glires</taxon>
        <taxon>Rodentia</taxon>
        <taxon>Myomorpha</taxon>
        <taxon>Muroidea</taxon>
        <taxon>Muridae</taxon>
        <taxon>Murinae</taxon>
        <taxon>Rattus</taxon>
    </lineage>
</organism>
<proteinExistence type="evidence at protein level"/>
<feature type="chain" id="PRO_0000087004" description="ERC protein 2">
    <location>
        <begin position="1"/>
        <end position="957"/>
    </location>
</feature>
<feature type="region of interest" description="Disordered" evidence="3">
    <location>
        <begin position="1"/>
        <end position="44"/>
    </location>
</feature>
<feature type="region of interest" description="Involved in binding to RIMS1">
    <location>
        <begin position="760"/>
        <end position="957"/>
    </location>
</feature>
<feature type="region of interest" description="Disordered" evidence="3">
    <location>
        <begin position="918"/>
        <end position="957"/>
    </location>
</feature>
<feature type="coiled-coil region" evidence="2">
    <location>
        <begin position="140"/>
        <end position="917"/>
    </location>
</feature>
<feature type="compositionally biased region" description="Polar residues" evidence="3">
    <location>
        <begin position="1"/>
        <end position="13"/>
    </location>
</feature>
<feature type="compositionally biased region" description="Low complexity" evidence="3">
    <location>
        <begin position="14"/>
        <end position="25"/>
    </location>
</feature>
<feature type="compositionally biased region" description="Basic residues" evidence="3">
    <location>
        <begin position="922"/>
        <end position="943"/>
    </location>
</feature>
<feature type="compositionally biased region" description="Acidic residues" evidence="3">
    <location>
        <begin position="948"/>
        <end position="957"/>
    </location>
</feature>
<feature type="modified residue" description="Phosphoserine" evidence="1">
    <location>
        <position position="65"/>
    </location>
</feature>
<feature type="modified residue" description="Phosphoserine" evidence="1">
    <location>
        <position position="666"/>
    </location>
</feature>
<feature type="splice variant" id="VSP_011472" description="In isoform 2." evidence="7">
    <original>Q</original>
    <variation>QLLDARRTK</variation>
    <location>
        <position position="219"/>
    </location>
</feature>
<feature type="splice variant" id="VSP_011473" description="In isoform 2." evidence="7">
    <location>
        <begin position="492"/>
        <end position="547"/>
    </location>
</feature>
<feature type="splice variant" id="VSP_011474" description="In isoform 2." evidence="7">
    <original>K</original>
    <variation>KQAEQLFNQMYNP</variation>
    <location>
        <position position="687"/>
    </location>
</feature>
<feature type="sequence conflict" description="In Ref. 2; AAN39292." evidence="8" ref="2">
    <original>N</original>
    <variation>I</variation>
    <location>
        <position position="436"/>
    </location>
</feature>
<feature type="sequence conflict" description="In Ref. 2; AAN39292." evidence="8" ref="2">
    <original>F</original>
    <variation>D</variation>
    <location>
        <position position="791"/>
    </location>
</feature>
<keyword id="KW-0002">3D-structure</keyword>
<keyword id="KW-0025">Alternative splicing</keyword>
<keyword id="KW-0966">Cell projection</keyword>
<keyword id="KW-0175">Coiled coil</keyword>
<keyword id="KW-0963">Cytoplasm</keyword>
<keyword id="KW-0206">Cytoskeleton</keyword>
<keyword id="KW-0903">Direct protein sequencing</keyword>
<keyword id="KW-0597">Phosphoprotein</keyword>
<keyword id="KW-1185">Reference proteome</keyword>
<keyword id="KW-0770">Synapse</keyword>
<reference key="1">
    <citation type="journal article" date="2002" name="J. Cell Biol.">
        <title>Cast: a novel protein of the cytomatrix at the active zone of synapses that forms a ternary complex with RIM1 and Munc13-1.</title>
        <authorList>
            <person name="Ohtsuka T."/>
            <person name="Takao-Rikitsu E."/>
            <person name="Inoue E."/>
            <person name="Inoue M."/>
            <person name="Takeuchi M."/>
            <person name="Matsubara K."/>
            <person name="Deguchi-Tawarada M."/>
            <person name="Satoh K."/>
            <person name="Morimoto K."/>
            <person name="Nakanishi H."/>
            <person name="Takai Y."/>
        </authorList>
    </citation>
    <scope>NUCLEOTIDE SEQUENCE [MRNA] (ISOFORM 1)</scope>
    <scope>SUBCELLULAR LOCATION</scope>
    <scope>TISSUE SPECIFICITY</scope>
    <scope>DEVELOPMENTAL STAGE</scope>
    <scope>INTERACTION WITH RIMS1 AND BSN</scope>
    <scope>IDENTIFICATION IN A COMPLEX WITH RIMS1 AND UNC13A</scope>
    <source>
        <strain>Sprague-Dawley</strain>
    </source>
</reference>
<reference key="2">
    <citation type="journal article" date="2002" name="Proc. Natl. Acad. Sci. U.S.A.">
        <title>A family of RIM-binding proteins regulated by alternative splicing: Implications for the genesis of synaptic active zones.</title>
        <authorList>
            <person name="Wang Y."/>
            <person name="Liu X."/>
            <person name="Biederer T."/>
            <person name="Suedhof T.C."/>
        </authorList>
    </citation>
    <scope>NUCLEOTIDE SEQUENCE [MRNA] (ISOFORM 2)</scope>
    <scope>SUBCELLULAR LOCATION</scope>
    <scope>TISSUE SPECIFICITY</scope>
</reference>
<reference key="3">
    <citation type="submission" date="2007-09" db="UniProtKB">
        <authorList>
            <person name="Lubec G."/>
            <person name="Chen W.-Q."/>
            <person name="Kang S.U."/>
            <person name="Lubec S."/>
        </authorList>
    </citation>
    <scope>PROTEIN SEQUENCE OF 1-17; 276-281; 332-349; 373-383; 406-420; 447-456; 485-496; 521-528; 547-556; 629-659; 666-674; 729-734; 779-787 AND 856-879</scope>
    <scope>IDENTIFICATION BY MASS SPECTROMETRY</scope>
    <source>
        <strain>Sprague-Dawley</strain>
        <tissue>Brain</tissue>
        <tissue>Hippocampus</tissue>
    </source>
</reference>
<reference key="4">
    <citation type="journal article" date="2004" name="Genes Cells">
        <title>CAST2: identification and characterization of a protein structurally related to the presynaptic cytomatrix protein CAST.</title>
        <authorList>
            <person name="Deguchi-Tawarada M."/>
            <person name="Inoue E."/>
            <person name="Takao-Rikitsu E."/>
            <person name="Inoue M."/>
            <person name="Ohtsuka T."/>
            <person name="Takai Y."/>
        </authorList>
    </citation>
    <scope>INTERACTION WITH ERC1</scope>
    <source>
        <strain>Sprague-Dawley</strain>
    </source>
</reference>
<reference key="5">
    <citation type="journal article" date="2012" name="Nat. Commun.">
        <title>Quantitative maps of protein phosphorylation sites across 14 different rat organs and tissues.</title>
        <authorList>
            <person name="Lundby A."/>
            <person name="Secher A."/>
            <person name="Lage K."/>
            <person name="Nordsborg N.B."/>
            <person name="Dmytriyev A."/>
            <person name="Lundby C."/>
            <person name="Olsen J.V."/>
        </authorList>
    </citation>
    <scope>IDENTIFICATION BY MASS SPECTROMETRY [LARGE SCALE ANALYSIS]</scope>
</reference>
<sequence>MYGSARTISNPEGSPSRSPRLPRSPRLGHRRTSSGGGGGTGKTLSMENIQSLNAAYATSGPMYLSDHEGVASTTYPKGTMTLGRATNRAVYGGRVTAMGSSPNIASAGLSHTDVLSYTDQHGGLGGSSHHHHHQVPSMLRQVRDSTMLDLQAQLKELQRENDLLRKELDIKDSKLGSSMNSIKTFWSPELKKERVLRKEEAARMSVLKEQMRVSHEENQHLQLTIQALQDELRTQRDLNHLLQQESGNRGAEHFTIELTEENFRRLQAEHDRQAKELFLLRKTLEEMELRIETQKQTLNARDESIKKLLEMLQSKGLPSKSLEDDNERTRRMAEAESQVSHLEVILDQKEKENIHLREELHRRSQLQPEPAKTKALQTVIEMKDTKIASLERNIRDLEDEIQMLKANGVLNTEDREEEIKQIEVYKSHSKFMKTKNDQLKQELSKKESELLALQTKLETLSNQNSDCKQHIEVLKESLTAKEQRAAILQTEVDALRLRLEEKESFLNKKTKQLQDLTEEKGTLAGEIRDMKDMLEVKERKINVLQKKIENLQEQLRDKDKQLTNLKDRVKSLQTDSSNTDTALATLEEALSEKERIIERLKEQRERDDRERLEEIESFRKENKDLKEKVNALQAELTEKESSLIDLKEHASSLASAGLKRDSKLKSLEIAIEQKKEECNKLEAQLKKAHNIEDDSRMNPEFADRLKQLDKEASYYRDECGKAQAEVDRLLEILKEVENEKNDKDKKIAELESLTLRHMKDQNKKVANLKHNQQLEKKKNAQLLEEVRRREFSMVDNSQHLQIEELMNALEKTRQELDATKARLASTQQSLAEKEAHLANLRMERRKQLEEILEMKQEALLAAISEKDANIALLELSASKKKKTQEEVMALKREKDRLVHQLKQQTQNRMKLMADNYDDDHHHYHHHHHHHHHRSPGRSQHSNHRPSPDQDDEEGIWA</sequence>